<gene>
    <name evidence="1" type="primary">rny</name>
    <name type="ordered locus">UPA3_0084</name>
</gene>
<comment type="function">
    <text evidence="1">Endoribonuclease that initiates mRNA decay.</text>
</comment>
<comment type="subcellular location">
    <subcellularLocation>
        <location evidence="1">Cell membrane</location>
        <topology evidence="1">Single-pass membrane protein</topology>
    </subcellularLocation>
</comment>
<comment type="similarity">
    <text evidence="1">Belongs to the RNase Y family.</text>
</comment>
<name>RNY_UREP2</name>
<proteinExistence type="inferred from homology"/>
<accession>B1AI70</accession>
<protein>
    <recommendedName>
        <fullName evidence="1">Ribonuclease Y</fullName>
        <shortName evidence="1">RNase Y</shortName>
        <ecNumber evidence="1">3.1.-.-</ecNumber>
    </recommendedName>
</protein>
<dbReference type="EC" id="3.1.-.-" evidence="1"/>
<dbReference type="EMBL" id="CP000942">
    <property type="protein sequence ID" value="ACA32756.1"/>
    <property type="molecule type" value="Genomic_DNA"/>
</dbReference>
<dbReference type="RefSeq" id="WP_006688749.1">
    <property type="nucleotide sequence ID" value="NC_010503.1"/>
</dbReference>
<dbReference type="SMR" id="B1AI70"/>
<dbReference type="GeneID" id="29672747"/>
<dbReference type="KEGG" id="upa:UPA3_0084"/>
<dbReference type="HOGENOM" id="CLU_028328_1_0_14"/>
<dbReference type="Proteomes" id="UP000002162">
    <property type="component" value="Chromosome"/>
</dbReference>
<dbReference type="GO" id="GO:0005886">
    <property type="term" value="C:plasma membrane"/>
    <property type="evidence" value="ECO:0007669"/>
    <property type="project" value="UniProtKB-SubCell"/>
</dbReference>
<dbReference type="GO" id="GO:0003723">
    <property type="term" value="F:RNA binding"/>
    <property type="evidence" value="ECO:0007669"/>
    <property type="project" value="UniProtKB-UniRule"/>
</dbReference>
<dbReference type="GO" id="GO:0004521">
    <property type="term" value="F:RNA endonuclease activity"/>
    <property type="evidence" value="ECO:0007669"/>
    <property type="project" value="UniProtKB-UniRule"/>
</dbReference>
<dbReference type="GO" id="GO:0006402">
    <property type="term" value="P:mRNA catabolic process"/>
    <property type="evidence" value="ECO:0007669"/>
    <property type="project" value="UniProtKB-UniRule"/>
</dbReference>
<dbReference type="CDD" id="cd00077">
    <property type="entry name" value="HDc"/>
    <property type="match status" value="1"/>
</dbReference>
<dbReference type="CDD" id="cd22431">
    <property type="entry name" value="KH-I_RNaseY"/>
    <property type="match status" value="1"/>
</dbReference>
<dbReference type="Gene3D" id="1.10.3210.10">
    <property type="entry name" value="Hypothetical protein af1432"/>
    <property type="match status" value="1"/>
</dbReference>
<dbReference type="HAMAP" id="MF_00335">
    <property type="entry name" value="RNase_Y"/>
    <property type="match status" value="1"/>
</dbReference>
<dbReference type="InterPro" id="IPR051094">
    <property type="entry name" value="Diverse_Catalytic_Enzymes"/>
</dbReference>
<dbReference type="InterPro" id="IPR003607">
    <property type="entry name" value="HD/PDEase_dom"/>
</dbReference>
<dbReference type="InterPro" id="IPR006674">
    <property type="entry name" value="HD_domain"/>
</dbReference>
<dbReference type="InterPro" id="IPR006675">
    <property type="entry name" value="HDIG_dom"/>
</dbReference>
<dbReference type="InterPro" id="IPR036612">
    <property type="entry name" value="KH_dom_type_1_sf"/>
</dbReference>
<dbReference type="InterPro" id="IPR017705">
    <property type="entry name" value="Ribonuclease_Y"/>
</dbReference>
<dbReference type="NCBIfam" id="TIGR00277">
    <property type="entry name" value="HDIG"/>
    <property type="match status" value="1"/>
</dbReference>
<dbReference type="NCBIfam" id="NF009347">
    <property type="entry name" value="PRK12705.1-4"/>
    <property type="match status" value="1"/>
</dbReference>
<dbReference type="PANTHER" id="PTHR35795:SF1">
    <property type="entry name" value="BIS(5'-NUCLEOSYL)-TETRAPHOSPHATASE, SYMMETRICAL"/>
    <property type="match status" value="1"/>
</dbReference>
<dbReference type="PANTHER" id="PTHR35795">
    <property type="entry name" value="SLR1885 PROTEIN"/>
    <property type="match status" value="1"/>
</dbReference>
<dbReference type="Pfam" id="PF01966">
    <property type="entry name" value="HD"/>
    <property type="match status" value="1"/>
</dbReference>
<dbReference type="SMART" id="SM00471">
    <property type="entry name" value="HDc"/>
    <property type="match status" value="1"/>
</dbReference>
<dbReference type="SUPFAM" id="SSF54791">
    <property type="entry name" value="Eukaryotic type KH-domain (KH-domain type I)"/>
    <property type="match status" value="1"/>
</dbReference>
<dbReference type="SUPFAM" id="SSF109604">
    <property type="entry name" value="HD-domain/PDEase-like"/>
    <property type="match status" value="1"/>
</dbReference>
<dbReference type="PROSITE" id="PS51831">
    <property type="entry name" value="HD"/>
    <property type="match status" value="1"/>
</dbReference>
<organism>
    <name type="scientific">Ureaplasma parvum serovar 3 (strain ATCC 27815 / 27 / NCTC 11736)</name>
    <dbReference type="NCBI Taxonomy" id="505682"/>
    <lineage>
        <taxon>Bacteria</taxon>
        <taxon>Bacillati</taxon>
        <taxon>Mycoplasmatota</taxon>
        <taxon>Mycoplasmoidales</taxon>
        <taxon>Mycoplasmoidaceae</taxon>
        <taxon>Ureaplasma</taxon>
    </lineage>
</organism>
<evidence type="ECO:0000255" key="1">
    <source>
        <dbReference type="HAMAP-Rule" id="MF_00335"/>
    </source>
</evidence>
<evidence type="ECO:0000255" key="2">
    <source>
        <dbReference type="PROSITE-ProRule" id="PRU01175"/>
    </source>
</evidence>
<reference key="1">
    <citation type="submission" date="2008-02" db="EMBL/GenBank/DDBJ databases">
        <title>Genome sequence of Ureaplasma parvum serovar 3.</title>
        <authorList>
            <person name="Methe B.A."/>
            <person name="Glass J."/>
            <person name="Waites K."/>
            <person name="Shrivastava S."/>
        </authorList>
    </citation>
    <scope>NUCLEOTIDE SEQUENCE [LARGE SCALE GENOMIC DNA]</scope>
    <source>
        <strain>ATCC 27815 / 27 / NCTC 11736</strain>
    </source>
</reference>
<keyword id="KW-1003">Cell membrane</keyword>
<keyword id="KW-0255">Endonuclease</keyword>
<keyword id="KW-0378">Hydrolase</keyword>
<keyword id="KW-0472">Membrane</keyword>
<keyword id="KW-0540">Nuclease</keyword>
<keyword id="KW-0694">RNA-binding</keyword>
<keyword id="KW-0812">Transmembrane</keyword>
<keyword id="KW-1133">Transmembrane helix</keyword>
<feature type="chain" id="PRO_0000344972" description="Ribonuclease Y">
    <location>
        <begin position="1"/>
        <end position="473"/>
    </location>
</feature>
<feature type="transmembrane region" description="Helical" evidence="1">
    <location>
        <begin position="4"/>
        <end position="24"/>
    </location>
</feature>
<feature type="domain" description="KH" evidence="1">
    <location>
        <begin position="158"/>
        <end position="218"/>
    </location>
</feature>
<feature type="domain" description="HD" evidence="2">
    <location>
        <begin position="285"/>
        <end position="378"/>
    </location>
</feature>
<sequence>MGYLIAFIILLILFVLLITIVPVVMVVYLKKKQLKLTFVPKSQTSFKKIVQKTKDLEEECEDLNNKNNELKKAISDQNLQIDLLKKNNENFLLNATSLTAEQAKKELFNLLKIKFKKELAQEYAKIKHEFNEAQEIYAQNILVETMEQIAEPLIVERSLFNIDIIDENLKGKIIGRDGRNKAVFENEGGVDLIVDRQQPIVGISTPNPIRREIARIVMQKLIDSKNIDINRIELLFKEEREKFEKKVFEIGKNVVEQTLGFFDLPEGIYSYIGRMKFRNSYGQNILSHSLEVAEYAERIAKLINIDPIKAKKAAFFHDIGKTIDFESDLDHVEAGLLIAKKFNLDDYIYNAIESHHNKVIPTTIYGALVKIVDTLSAARPGARVNSYDEYYSRVKELETICMRFEGVKSAYVIKSGRQLRVIVDSNLVSDEQLELLGHEIKVAIEENDLLTNYKIKIVLIKEKRISIDTNIIG</sequence>